<name>SHPK_HUMAN</name>
<organism>
    <name type="scientific">Homo sapiens</name>
    <name type="common">Human</name>
    <dbReference type="NCBI Taxonomy" id="9606"/>
    <lineage>
        <taxon>Eukaryota</taxon>
        <taxon>Metazoa</taxon>
        <taxon>Chordata</taxon>
        <taxon>Craniata</taxon>
        <taxon>Vertebrata</taxon>
        <taxon>Euteleostomi</taxon>
        <taxon>Mammalia</taxon>
        <taxon>Eutheria</taxon>
        <taxon>Euarchontoglires</taxon>
        <taxon>Primates</taxon>
        <taxon>Haplorrhini</taxon>
        <taxon>Catarrhini</taxon>
        <taxon>Hominidae</taxon>
        <taxon>Homo</taxon>
    </lineage>
</organism>
<feature type="chain" id="PRO_0000059564" description="Sedoheptulokinase">
    <location>
        <begin position="1"/>
        <end position="478"/>
    </location>
</feature>
<feature type="sequence variant" id="VAR_042580" description="In dbSNP:rs150857." evidence="2">
    <original>E</original>
    <variation>K</variation>
    <location>
        <position position="215"/>
    </location>
</feature>
<feature type="sequence variant" id="VAR_048591" description="In dbSNP:rs224496.">
    <original>E</original>
    <variation>D</variation>
    <location>
        <position position="421"/>
    </location>
</feature>
<feature type="sequence variant" id="VAR_048592" description="In dbSNP:rs36125540.">
    <original>L</original>
    <variation>M</variation>
    <location>
        <position position="434"/>
    </location>
</feature>
<sequence>MAARPITLGIDLGTTSVKAALLRAAPDDPSGFAVLASCARAARAEAAVESAVAGPQGREQDVSRILQALHECLAALPRPQLRSVVGIGVSGQMHGVVFWKTGQGCEWTEGGITPVFEPRAVSHLVTWQDGRCSSEFLASLPQPKSHLSVATGFGCATIFWLLKYRPEFLKSYDAAGTIHDYVVAMLCGLPRPLMSDQNAASWGYFNTQSQSWNVETLRSSGFPVHLLPDIAEPGSVAGRTSHMWFEIPKGTQVGVALGDLQASVYSCMAQRTDAVLNISTSVQLAASMPSGFQPAQTPDPTAPVAYFPYFNRTYLGVAASLNGGNVLATFVHMLVQWMADLGLEVEESTVYSRMIQAAVQQRDTHLTITPTVLGERHLPDQLASVTRISSSDLSLGHVTRALCRGIVQNLHSMLPIQQLQEWGVERVMGSGSALSRNDVLKQEVQRAFPLPMSFGQDVDAAVGAALVMLRRHLNQKES</sequence>
<evidence type="ECO:0000250" key="1"/>
<evidence type="ECO:0000269" key="2">
    <source>
    </source>
</evidence>
<evidence type="ECO:0000269" key="3">
    <source>
    </source>
</evidence>
<evidence type="ECO:0000269" key="4">
    <source>
    </source>
</evidence>
<evidence type="ECO:0000269" key="5">
    <source>
    </source>
</evidence>
<evidence type="ECO:0000305" key="6"/>
<evidence type="ECO:0000312" key="7">
    <source>
        <dbReference type="HGNC" id="HGNC:1492"/>
    </source>
</evidence>
<dbReference type="EC" id="2.7.1.14" evidence="3"/>
<dbReference type="EMBL" id="AF163573">
    <property type="protein sequence ID" value="AAF24936.1"/>
    <property type="molecule type" value="mRNA"/>
</dbReference>
<dbReference type="EMBL" id="AF168787">
    <property type="protein sequence ID" value="AAF43103.1"/>
    <property type="molecule type" value="Genomic_DNA"/>
</dbReference>
<dbReference type="EMBL" id="AK312428">
    <property type="protein sequence ID" value="BAG35337.1"/>
    <property type="molecule type" value="mRNA"/>
</dbReference>
<dbReference type="EMBL" id="AL832420">
    <property type="protein sequence ID" value="CAH10646.1"/>
    <property type="molecule type" value="mRNA"/>
</dbReference>
<dbReference type="EMBL" id="AC027796">
    <property type="status" value="NOT_ANNOTATED_CDS"/>
    <property type="molecule type" value="Genomic_DNA"/>
</dbReference>
<dbReference type="EMBL" id="CH471108">
    <property type="protein sequence ID" value="EAW90501.1"/>
    <property type="molecule type" value="Genomic_DNA"/>
</dbReference>
<dbReference type="EMBL" id="BC020543">
    <property type="protein sequence ID" value="AAH20543.1"/>
    <property type="molecule type" value="mRNA"/>
</dbReference>
<dbReference type="CCDS" id="CCDS11030.1"/>
<dbReference type="RefSeq" id="NP_037408.2">
    <property type="nucleotide sequence ID" value="NM_013276.4"/>
</dbReference>
<dbReference type="SMR" id="Q9UHJ6"/>
<dbReference type="BioGRID" id="117235">
    <property type="interactions" value="41"/>
</dbReference>
<dbReference type="FunCoup" id="Q9UHJ6">
    <property type="interactions" value="785"/>
</dbReference>
<dbReference type="IntAct" id="Q9UHJ6">
    <property type="interactions" value="17"/>
</dbReference>
<dbReference type="STRING" id="9606.ENSP00000225519"/>
<dbReference type="iPTMnet" id="Q9UHJ6"/>
<dbReference type="PhosphoSitePlus" id="Q9UHJ6"/>
<dbReference type="BioMuta" id="SHPK"/>
<dbReference type="DMDM" id="296452959"/>
<dbReference type="jPOST" id="Q9UHJ6"/>
<dbReference type="MassIVE" id="Q9UHJ6"/>
<dbReference type="PaxDb" id="9606-ENSP00000225519"/>
<dbReference type="PeptideAtlas" id="Q9UHJ6"/>
<dbReference type="ProteomicsDB" id="84364"/>
<dbReference type="Pumba" id="Q9UHJ6"/>
<dbReference type="TopDownProteomics" id="Q9UHJ6"/>
<dbReference type="Antibodypedia" id="10891">
    <property type="antibodies" value="227 antibodies from 27 providers"/>
</dbReference>
<dbReference type="DNASU" id="23729"/>
<dbReference type="Ensembl" id="ENST00000225519.5">
    <property type="protein sequence ID" value="ENSP00000225519.3"/>
    <property type="gene ID" value="ENSG00000197417.9"/>
</dbReference>
<dbReference type="GeneID" id="23729"/>
<dbReference type="KEGG" id="hsa:23729"/>
<dbReference type="MANE-Select" id="ENST00000225519.5">
    <property type="protein sequence ID" value="ENSP00000225519.3"/>
    <property type="RefSeq nucleotide sequence ID" value="NM_013276.4"/>
    <property type="RefSeq protein sequence ID" value="NP_037408.2"/>
</dbReference>
<dbReference type="UCSC" id="uc002fvz.1">
    <property type="organism name" value="human"/>
</dbReference>
<dbReference type="AGR" id="HGNC:1492"/>
<dbReference type="CTD" id="23729"/>
<dbReference type="DisGeNET" id="23729"/>
<dbReference type="GeneCards" id="SHPK"/>
<dbReference type="HGNC" id="HGNC:1492">
    <property type="gene designation" value="SHPK"/>
</dbReference>
<dbReference type="HPA" id="ENSG00000197417">
    <property type="expression patterns" value="Low tissue specificity"/>
</dbReference>
<dbReference type="MalaCards" id="SHPK"/>
<dbReference type="MIM" id="605060">
    <property type="type" value="gene"/>
</dbReference>
<dbReference type="MIM" id="617213">
    <property type="type" value="phenotype"/>
</dbReference>
<dbReference type="neXtProt" id="NX_Q9UHJ6"/>
<dbReference type="OpenTargets" id="ENSG00000197417"/>
<dbReference type="OpenTargets" id="ENSG00000262304"/>
<dbReference type="Orphanet" id="440713">
    <property type="disease" value="Isolated sedoheptulokinase deficiency"/>
</dbReference>
<dbReference type="PharmGKB" id="PA162403312"/>
<dbReference type="VEuPathDB" id="HostDB:ENSG00000197417"/>
<dbReference type="eggNOG" id="KOG2517">
    <property type="taxonomic scope" value="Eukaryota"/>
</dbReference>
<dbReference type="GeneTree" id="ENSGT01000000214434"/>
<dbReference type="HOGENOM" id="CLU_021676_1_1_1"/>
<dbReference type="InParanoid" id="Q9UHJ6"/>
<dbReference type="OMA" id="TWQDTRC"/>
<dbReference type="OrthoDB" id="10264182at2759"/>
<dbReference type="PAN-GO" id="Q9UHJ6">
    <property type="GO annotations" value="5 GO annotations based on evolutionary models"/>
</dbReference>
<dbReference type="PhylomeDB" id="Q9UHJ6"/>
<dbReference type="TreeFam" id="TF315140"/>
<dbReference type="BioCyc" id="MetaCyc:G66-33950-MONOMER"/>
<dbReference type="BRENDA" id="2.7.1.14">
    <property type="organism ID" value="2681"/>
</dbReference>
<dbReference type="PathwayCommons" id="Q9UHJ6"/>
<dbReference type="Reactome" id="R-HSA-71336">
    <property type="pathway name" value="Pentose phosphate pathway"/>
</dbReference>
<dbReference type="SignaLink" id="Q9UHJ6"/>
<dbReference type="SIGNOR" id="Q9UHJ6"/>
<dbReference type="BioGRID-ORCS" id="23729">
    <property type="hits" value="10 hits in 1161 CRISPR screens"/>
</dbReference>
<dbReference type="GenomeRNAi" id="23729"/>
<dbReference type="Pharos" id="Q9UHJ6">
    <property type="development level" value="Tbio"/>
</dbReference>
<dbReference type="PRO" id="PR:Q9UHJ6"/>
<dbReference type="Proteomes" id="UP000005640">
    <property type="component" value="Chromosome 17"/>
</dbReference>
<dbReference type="RNAct" id="Q9UHJ6">
    <property type="molecule type" value="protein"/>
</dbReference>
<dbReference type="Bgee" id="ENSG00000197417">
    <property type="expression patterns" value="Expressed in right lobe of liver and 121 other cell types or tissues"/>
</dbReference>
<dbReference type="GO" id="GO:0005737">
    <property type="term" value="C:cytoplasm"/>
    <property type="evidence" value="ECO:0000250"/>
    <property type="project" value="UniProtKB"/>
</dbReference>
<dbReference type="GO" id="GO:0005829">
    <property type="term" value="C:cytosol"/>
    <property type="evidence" value="ECO:0000318"/>
    <property type="project" value="GO_Central"/>
</dbReference>
<dbReference type="GO" id="GO:0005524">
    <property type="term" value="F:ATP binding"/>
    <property type="evidence" value="ECO:0007669"/>
    <property type="project" value="UniProtKB-KW"/>
</dbReference>
<dbReference type="GO" id="GO:0050277">
    <property type="term" value="F:sedoheptulokinase activity"/>
    <property type="evidence" value="ECO:0000314"/>
    <property type="project" value="UniProtKB"/>
</dbReference>
<dbReference type="GO" id="GO:0005975">
    <property type="term" value="P:carbohydrate metabolic process"/>
    <property type="evidence" value="ECO:0000314"/>
    <property type="project" value="UniProtKB"/>
</dbReference>
<dbReference type="GO" id="GO:0035963">
    <property type="term" value="P:cellular response to interleukin-13"/>
    <property type="evidence" value="ECO:0000250"/>
    <property type="project" value="UniProtKB"/>
</dbReference>
<dbReference type="GO" id="GO:0071353">
    <property type="term" value="P:cellular response to interleukin-4"/>
    <property type="evidence" value="ECO:0000250"/>
    <property type="project" value="UniProtKB"/>
</dbReference>
<dbReference type="GO" id="GO:0071222">
    <property type="term" value="P:cellular response to lipopolysaccharide"/>
    <property type="evidence" value="ECO:0000314"/>
    <property type="project" value="UniProtKB"/>
</dbReference>
<dbReference type="GO" id="GO:0006098">
    <property type="term" value="P:pentose-phosphate shunt"/>
    <property type="evidence" value="ECO:0000304"/>
    <property type="project" value="Reactome"/>
</dbReference>
<dbReference type="GO" id="GO:0009052">
    <property type="term" value="P:pentose-phosphate shunt, non-oxidative branch"/>
    <property type="evidence" value="ECO:0000250"/>
    <property type="project" value="UniProtKB"/>
</dbReference>
<dbReference type="GO" id="GO:0016310">
    <property type="term" value="P:phosphorylation"/>
    <property type="evidence" value="ECO:0000314"/>
    <property type="project" value="UniProtKB"/>
</dbReference>
<dbReference type="GO" id="GO:0050727">
    <property type="term" value="P:regulation of inflammatory response"/>
    <property type="evidence" value="ECO:0000250"/>
    <property type="project" value="UniProtKB"/>
</dbReference>
<dbReference type="GO" id="GO:0043030">
    <property type="term" value="P:regulation of macrophage activation"/>
    <property type="evidence" value="ECO:0000250"/>
    <property type="project" value="UniProtKB"/>
</dbReference>
<dbReference type="CDD" id="cd07777">
    <property type="entry name" value="ASKHA_NBD_FGGY_SHK"/>
    <property type="match status" value="1"/>
</dbReference>
<dbReference type="FunFam" id="3.30.420.40:FF:000111">
    <property type="entry name" value="Sedoheptulokinase"/>
    <property type="match status" value="1"/>
</dbReference>
<dbReference type="FunFam" id="3.30.420.40:FF:000132">
    <property type="entry name" value="Sedoheptulokinase"/>
    <property type="match status" value="1"/>
</dbReference>
<dbReference type="Gene3D" id="3.30.420.40">
    <property type="match status" value="2"/>
</dbReference>
<dbReference type="InterPro" id="IPR043129">
    <property type="entry name" value="ATPase_NBD"/>
</dbReference>
<dbReference type="InterPro" id="IPR018484">
    <property type="entry name" value="FGGY_N"/>
</dbReference>
<dbReference type="PANTHER" id="PTHR10196:SF67">
    <property type="entry name" value="SEDOHEPTULOKINASE"/>
    <property type="match status" value="1"/>
</dbReference>
<dbReference type="PANTHER" id="PTHR10196">
    <property type="entry name" value="SUGAR KINASE"/>
    <property type="match status" value="1"/>
</dbReference>
<dbReference type="Pfam" id="PF00370">
    <property type="entry name" value="FGGY_N"/>
    <property type="match status" value="1"/>
</dbReference>
<dbReference type="SUPFAM" id="SSF53067">
    <property type="entry name" value="Actin-like ATPase domain"/>
    <property type="match status" value="2"/>
</dbReference>
<keyword id="KW-0067">ATP-binding</keyword>
<keyword id="KW-0963">Cytoplasm</keyword>
<keyword id="KW-0418">Kinase</keyword>
<keyword id="KW-0547">Nucleotide-binding</keyword>
<keyword id="KW-1267">Proteomics identification</keyword>
<keyword id="KW-1185">Reference proteome</keyword>
<keyword id="KW-0808">Transferase</keyword>
<comment type="function">
    <text evidence="1">Acts as a modulator of macrophage activation through control of glucose metabolism.</text>
</comment>
<comment type="catalytic activity">
    <reaction evidence="3">
        <text>sedoheptulose + ATP = D-sedoheptulose 7-phosphate + ADP + H(+)</text>
        <dbReference type="Rhea" id="RHEA:23844"/>
        <dbReference type="ChEBI" id="CHEBI:15378"/>
        <dbReference type="ChEBI" id="CHEBI:16802"/>
        <dbReference type="ChEBI" id="CHEBI:30616"/>
        <dbReference type="ChEBI" id="CHEBI:57483"/>
        <dbReference type="ChEBI" id="CHEBI:456216"/>
        <dbReference type="EC" id="2.7.1.14"/>
    </reaction>
</comment>
<comment type="biophysicochemical properties">
    <kinetics>
        <KM evidence="3">0.06 mM for sedoheptulose</KM>
    </kinetics>
    <phDependence>
        <text evidence="3">Optimum pH is 8.5.</text>
    </phDependence>
</comment>
<comment type="interaction">
    <interactant intactId="EBI-3938184">
        <id>Q9UHJ6</id>
    </interactant>
    <interactant intactId="EBI-2795681">
        <id>Q9P016</id>
        <label>THYN1</label>
    </interactant>
    <organismsDiffer>false</organismsDiffer>
    <experiments>2</experiments>
</comment>
<comment type="interaction">
    <interactant intactId="EBI-3938184">
        <id>Q9UHJ6</id>
    </interactant>
    <interactant intactId="EBI-357631">
        <id>Q13114</id>
        <label>TRAF3</label>
    </interactant>
    <organismsDiffer>false</organismsDiffer>
    <experiments>2</experiments>
</comment>
<comment type="subcellular location">
    <subcellularLocation>
        <location evidence="1">Cytoplasm</location>
    </subcellularLocation>
</comment>
<comment type="tissue specificity">
    <text evidence="2">Strongly expressed in liver, kidney and pancreas. Expressed at lower levels in placenta and heart. Very weakly expressed in lung and brain.</text>
</comment>
<comment type="induction">
    <text evidence="4">Down-regulated by LPS.</text>
</comment>
<comment type="disease" evidence="5">
    <disease id="DI-04872">
        <name>Sedoheptulokinase deficiency</name>
        <acronym>SHPKD</acronym>
        <description>An autosomal recessive metabolic disease characterized by increased urinary erythritol and sedoheptulose. Neonatal cholestasis, hypoglycemia, anemia, congenital arthrogryposis multiplex, multiple contractures and dysmorphisms have been reported in SHPKD patients, but the relationship of these features to the SHPKD is unclear.</description>
        <dbReference type="MIM" id="617213"/>
    </disease>
    <text>The disease is caused by variants affecting the gene represented in this entry.</text>
</comment>
<comment type="similarity">
    <text evidence="6">Belongs to the FGGY kinase family.</text>
</comment>
<accession>Q9UHJ6</accession>
<accession>B2R640</accession>
<accession>Q8WUH3</accession>
<proteinExistence type="evidence at protein level"/>
<protein>
    <recommendedName>
        <fullName evidence="6">Sedoheptulokinase</fullName>
        <shortName>SHK</shortName>
        <ecNumber evidence="3">2.7.1.14</ecNumber>
    </recommendedName>
    <alternativeName>
        <fullName>Carbohydrate kinase-like protein</fullName>
    </alternativeName>
</protein>
<reference key="1">
    <citation type="journal article" date="2000" name="Genome Res.">
        <title>The genomic region encompassing the nephropathic cystinosis gene (CTNS): complete sequencing of a 200-kb segment and discovery of a novel gene within the common cystinosis-causing deletion.</title>
        <authorList>
            <person name="Touchman J.W."/>
            <person name="Anikster Y."/>
            <person name="Dietrich N.L."/>
            <person name="Maduro V.V.B."/>
            <person name="McDowell G."/>
            <person name="Shotelersuk V."/>
            <person name="Bouffard G.G."/>
            <person name="Beckstrom-Sternberg S.M."/>
            <person name="Gahl W.A."/>
            <person name="Green E.D."/>
        </authorList>
    </citation>
    <scope>NUCLEOTIDE SEQUENCE [GENOMIC DNA / MRNA]</scope>
    <scope>TISSUE SPECIFICITY</scope>
    <scope>VARIANT LYS-215</scope>
    <source>
        <tissue>Fetal kidney</tissue>
    </source>
</reference>
<reference key="2">
    <citation type="journal article" date="2004" name="Nat. Genet.">
        <title>Complete sequencing and characterization of 21,243 full-length human cDNAs.</title>
        <authorList>
            <person name="Ota T."/>
            <person name="Suzuki Y."/>
            <person name="Nishikawa T."/>
            <person name="Otsuki T."/>
            <person name="Sugiyama T."/>
            <person name="Irie R."/>
            <person name="Wakamatsu A."/>
            <person name="Hayashi K."/>
            <person name="Sato H."/>
            <person name="Nagai K."/>
            <person name="Kimura K."/>
            <person name="Makita H."/>
            <person name="Sekine M."/>
            <person name="Obayashi M."/>
            <person name="Nishi T."/>
            <person name="Shibahara T."/>
            <person name="Tanaka T."/>
            <person name="Ishii S."/>
            <person name="Yamamoto J."/>
            <person name="Saito K."/>
            <person name="Kawai Y."/>
            <person name="Isono Y."/>
            <person name="Nakamura Y."/>
            <person name="Nagahari K."/>
            <person name="Murakami K."/>
            <person name="Yasuda T."/>
            <person name="Iwayanagi T."/>
            <person name="Wagatsuma M."/>
            <person name="Shiratori A."/>
            <person name="Sudo H."/>
            <person name="Hosoiri T."/>
            <person name="Kaku Y."/>
            <person name="Kodaira H."/>
            <person name="Kondo H."/>
            <person name="Sugawara M."/>
            <person name="Takahashi M."/>
            <person name="Kanda K."/>
            <person name="Yokoi T."/>
            <person name="Furuya T."/>
            <person name="Kikkawa E."/>
            <person name="Omura Y."/>
            <person name="Abe K."/>
            <person name="Kamihara K."/>
            <person name="Katsuta N."/>
            <person name="Sato K."/>
            <person name="Tanikawa M."/>
            <person name="Yamazaki M."/>
            <person name="Ninomiya K."/>
            <person name="Ishibashi T."/>
            <person name="Yamashita H."/>
            <person name="Murakawa K."/>
            <person name="Fujimori K."/>
            <person name="Tanai H."/>
            <person name="Kimata M."/>
            <person name="Watanabe M."/>
            <person name="Hiraoka S."/>
            <person name="Chiba Y."/>
            <person name="Ishida S."/>
            <person name="Ono Y."/>
            <person name="Takiguchi S."/>
            <person name="Watanabe S."/>
            <person name="Yosida M."/>
            <person name="Hotuta T."/>
            <person name="Kusano J."/>
            <person name="Kanehori K."/>
            <person name="Takahashi-Fujii A."/>
            <person name="Hara H."/>
            <person name="Tanase T.-O."/>
            <person name="Nomura Y."/>
            <person name="Togiya S."/>
            <person name="Komai F."/>
            <person name="Hara R."/>
            <person name="Takeuchi K."/>
            <person name="Arita M."/>
            <person name="Imose N."/>
            <person name="Musashino K."/>
            <person name="Yuuki H."/>
            <person name="Oshima A."/>
            <person name="Sasaki N."/>
            <person name="Aotsuka S."/>
            <person name="Yoshikawa Y."/>
            <person name="Matsunawa H."/>
            <person name="Ichihara T."/>
            <person name="Shiohata N."/>
            <person name="Sano S."/>
            <person name="Moriya S."/>
            <person name="Momiyama H."/>
            <person name="Satoh N."/>
            <person name="Takami S."/>
            <person name="Terashima Y."/>
            <person name="Suzuki O."/>
            <person name="Nakagawa S."/>
            <person name="Senoh A."/>
            <person name="Mizoguchi H."/>
            <person name="Goto Y."/>
            <person name="Shimizu F."/>
            <person name="Wakebe H."/>
            <person name="Hishigaki H."/>
            <person name="Watanabe T."/>
            <person name="Sugiyama A."/>
            <person name="Takemoto M."/>
            <person name="Kawakami B."/>
            <person name="Yamazaki M."/>
            <person name="Watanabe K."/>
            <person name="Kumagai A."/>
            <person name="Itakura S."/>
            <person name="Fukuzumi Y."/>
            <person name="Fujimori Y."/>
            <person name="Komiyama M."/>
            <person name="Tashiro H."/>
            <person name="Tanigami A."/>
            <person name="Fujiwara T."/>
            <person name="Ono T."/>
            <person name="Yamada K."/>
            <person name="Fujii Y."/>
            <person name="Ozaki K."/>
            <person name="Hirao M."/>
            <person name="Ohmori Y."/>
            <person name="Kawabata A."/>
            <person name="Hikiji T."/>
            <person name="Kobatake N."/>
            <person name="Inagaki H."/>
            <person name="Ikema Y."/>
            <person name="Okamoto S."/>
            <person name="Okitani R."/>
            <person name="Kawakami T."/>
            <person name="Noguchi S."/>
            <person name="Itoh T."/>
            <person name="Shigeta K."/>
            <person name="Senba T."/>
            <person name="Matsumura K."/>
            <person name="Nakajima Y."/>
            <person name="Mizuno T."/>
            <person name="Morinaga M."/>
            <person name="Sasaki M."/>
            <person name="Togashi T."/>
            <person name="Oyama M."/>
            <person name="Hata H."/>
            <person name="Watanabe M."/>
            <person name="Komatsu T."/>
            <person name="Mizushima-Sugano J."/>
            <person name="Satoh T."/>
            <person name="Shirai Y."/>
            <person name="Takahashi Y."/>
            <person name="Nakagawa K."/>
            <person name="Okumura K."/>
            <person name="Nagase T."/>
            <person name="Nomura N."/>
            <person name="Kikuchi H."/>
            <person name="Masuho Y."/>
            <person name="Yamashita R."/>
            <person name="Nakai K."/>
            <person name="Yada T."/>
            <person name="Nakamura Y."/>
            <person name="Ohara O."/>
            <person name="Isogai T."/>
            <person name="Sugano S."/>
        </authorList>
    </citation>
    <scope>NUCLEOTIDE SEQUENCE [LARGE SCALE MRNA]</scope>
    <source>
        <tissue>Brain</tissue>
    </source>
</reference>
<reference key="3">
    <citation type="journal article" date="2007" name="BMC Genomics">
        <title>The full-ORF clone resource of the German cDNA consortium.</title>
        <authorList>
            <person name="Bechtel S."/>
            <person name="Rosenfelder H."/>
            <person name="Duda A."/>
            <person name="Schmidt C.P."/>
            <person name="Ernst U."/>
            <person name="Wellenreuther R."/>
            <person name="Mehrle A."/>
            <person name="Schuster C."/>
            <person name="Bahr A."/>
            <person name="Bloecker H."/>
            <person name="Heubner D."/>
            <person name="Hoerlein A."/>
            <person name="Michel G."/>
            <person name="Wedler H."/>
            <person name="Koehrer K."/>
            <person name="Ottenwaelder B."/>
            <person name="Poustka A."/>
            <person name="Wiemann S."/>
            <person name="Schupp I."/>
        </authorList>
    </citation>
    <scope>NUCLEOTIDE SEQUENCE [LARGE SCALE MRNA]</scope>
    <source>
        <tissue>Melanoma</tissue>
    </source>
</reference>
<reference key="4">
    <citation type="journal article" date="2006" name="Nature">
        <title>DNA sequence of human chromosome 17 and analysis of rearrangement in the human lineage.</title>
        <authorList>
            <person name="Zody M.C."/>
            <person name="Garber M."/>
            <person name="Adams D.J."/>
            <person name="Sharpe T."/>
            <person name="Harrow J."/>
            <person name="Lupski J.R."/>
            <person name="Nicholson C."/>
            <person name="Searle S.M."/>
            <person name="Wilming L."/>
            <person name="Young S.K."/>
            <person name="Abouelleil A."/>
            <person name="Allen N.R."/>
            <person name="Bi W."/>
            <person name="Bloom T."/>
            <person name="Borowsky M.L."/>
            <person name="Bugalter B.E."/>
            <person name="Butler J."/>
            <person name="Chang J.L."/>
            <person name="Chen C.-K."/>
            <person name="Cook A."/>
            <person name="Corum B."/>
            <person name="Cuomo C.A."/>
            <person name="de Jong P.J."/>
            <person name="DeCaprio D."/>
            <person name="Dewar K."/>
            <person name="FitzGerald M."/>
            <person name="Gilbert J."/>
            <person name="Gibson R."/>
            <person name="Gnerre S."/>
            <person name="Goldstein S."/>
            <person name="Grafham D.V."/>
            <person name="Grocock R."/>
            <person name="Hafez N."/>
            <person name="Hagopian D.S."/>
            <person name="Hart E."/>
            <person name="Norman C.H."/>
            <person name="Humphray S."/>
            <person name="Jaffe D.B."/>
            <person name="Jones M."/>
            <person name="Kamal M."/>
            <person name="Khodiyar V.K."/>
            <person name="LaButti K."/>
            <person name="Laird G."/>
            <person name="Lehoczky J."/>
            <person name="Liu X."/>
            <person name="Lokyitsang T."/>
            <person name="Loveland J."/>
            <person name="Lui A."/>
            <person name="Macdonald P."/>
            <person name="Major J.E."/>
            <person name="Matthews L."/>
            <person name="Mauceli E."/>
            <person name="McCarroll S.A."/>
            <person name="Mihalev A.H."/>
            <person name="Mudge J."/>
            <person name="Nguyen C."/>
            <person name="Nicol R."/>
            <person name="O'Leary S.B."/>
            <person name="Osoegawa K."/>
            <person name="Schwartz D.C."/>
            <person name="Shaw-Smith C."/>
            <person name="Stankiewicz P."/>
            <person name="Steward C."/>
            <person name="Swarbreck D."/>
            <person name="Venkataraman V."/>
            <person name="Whittaker C.A."/>
            <person name="Yang X."/>
            <person name="Zimmer A.R."/>
            <person name="Bradley A."/>
            <person name="Hubbard T."/>
            <person name="Birren B.W."/>
            <person name="Rogers J."/>
            <person name="Lander E.S."/>
            <person name="Nusbaum C."/>
        </authorList>
    </citation>
    <scope>NUCLEOTIDE SEQUENCE [LARGE SCALE GENOMIC DNA]</scope>
</reference>
<reference key="5">
    <citation type="submission" date="2005-09" db="EMBL/GenBank/DDBJ databases">
        <authorList>
            <person name="Mural R.J."/>
            <person name="Istrail S."/>
            <person name="Sutton G.G."/>
            <person name="Florea L."/>
            <person name="Halpern A.L."/>
            <person name="Mobarry C.M."/>
            <person name="Lippert R."/>
            <person name="Walenz B."/>
            <person name="Shatkay H."/>
            <person name="Dew I."/>
            <person name="Miller J.R."/>
            <person name="Flanigan M.J."/>
            <person name="Edwards N.J."/>
            <person name="Bolanos R."/>
            <person name="Fasulo D."/>
            <person name="Halldorsson B.V."/>
            <person name="Hannenhalli S."/>
            <person name="Turner R."/>
            <person name="Yooseph S."/>
            <person name="Lu F."/>
            <person name="Nusskern D.R."/>
            <person name="Shue B.C."/>
            <person name="Zheng X.H."/>
            <person name="Zhong F."/>
            <person name="Delcher A.L."/>
            <person name="Huson D.H."/>
            <person name="Kravitz S.A."/>
            <person name="Mouchard L."/>
            <person name="Reinert K."/>
            <person name="Remington K.A."/>
            <person name="Clark A.G."/>
            <person name="Waterman M.S."/>
            <person name="Eichler E.E."/>
            <person name="Adams M.D."/>
            <person name="Hunkapiller M.W."/>
            <person name="Myers E.W."/>
            <person name="Venter J.C."/>
        </authorList>
    </citation>
    <scope>NUCLEOTIDE SEQUENCE [LARGE SCALE GENOMIC DNA]</scope>
</reference>
<reference key="6">
    <citation type="journal article" date="2004" name="Genome Res.">
        <title>The status, quality, and expansion of the NIH full-length cDNA project: the Mammalian Gene Collection (MGC).</title>
        <authorList>
            <consortium name="The MGC Project Team"/>
        </authorList>
    </citation>
    <scope>NUCLEOTIDE SEQUENCE [LARGE SCALE MRNA]</scope>
    <source>
        <tissue>Liver</tissue>
    </source>
</reference>
<reference key="7">
    <citation type="journal article" date="2008" name="Hum. Mutat.">
        <title>Sedoheptulokinase deficiency due to a 57-kb deletion in cystinosis patients causes urinary accumulation of sedoheptulose: elucidation of the CARKL gene.</title>
        <authorList>
            <person name="Wamelink M.M."/>
            <person name="Struys E.A."/>
            <person name="Jansen E.E."/>
            <person name="Levtchenko E.N."/>
            <person name="Zijlstra F.S."/>
            <person name="Engelke U."/>
            <person name="Blom H.J."/>
            <person name="Jakobs C."/>
            <person name="Wevers R.A."/>
        </authorList>
    </citation>
    <scope>CATALYTIC ACTIVITY</scope>
    <scope>BIOPHYSICOCHEMICAL PROPERTIES</scope>
</reference>
<reference key="8">
    <citation type="journal article" date="2012" name="Cell Metab.">
        <title>The sedoheptulose kinase CARKL directs macrophage polarization through control of glucose metabolism.</title>
        <authorList>
            <person name="Haschemi A."/>
            <person name="Kosma P."/>
            <person name="Gille L."/>
            <person name="Evans C.R."/>
            <person name="Burant C.F."/>
            <person name="Starkl P."/>
            <person name="Knapp B."/>
            <person name="Haas R."/>
            <person name="Schmid J.A."/>
            <person name="Jandl C."/>
            <person name="Amir S."/>
            <person name="Lubec G."/>
            <person name="Park J."/>
            <person name="Esterbauer H."/>
            <person name="Bilban M."/>
            <person name="Brizuela L."/>
            <person name="Pospisilik J.A."/>
            <person name="Otterbein L.E."/>
            <person name="Wagner O."/>
        </authorList>
    </citation>
    <scope>INDUCTION</scope>
</reference>
<reference key="9">
    <citation type="journal article" date="2015" name="J. Inherit. Metab. Dis.">
        <title>First two unrelated cases of isolated sedoheptulokinase deficiency: A benign disorder?</title>
        <authorList>
            <person name="Wamelink M.M."/>
            <person name="Ramos R.J."/>
            <person name="van den Elzen A.P."/>
            <person name="Ruijter G.J."/>
            <person name="Bonte R."/>
            <person name="Diogo L."/>
            <person name="Garcia P."/>
            <person name="Neves N."/>
            <person name="Nota B."/>
            <person name="Haschemi A."/>
            <person name="Tavares de Almeida I."/>
            <person name="Salomons G.S."/>
        </authorList>
    </citation>
    <scope>INVOLVEMENT IN SHPKD</scope>
</reference>
<gene>
    <name evidence="7" type="primary">SHPK</name>
    <name type="synonym">CARKL</name>
</gene>